<keyword id="KW-0963">Cytoplasm</keyword>
<keyword id="KW-0227">DNA damage</keyword>
<keyword id="KW-0479">Metal-binding</keyword>
<keyword id="KW-0539">Nucleus</keyword>
<keyword id="KW-1185">Reference proteome</keyword>
<keyword id="KW-0677">Repeat</keyword>
<keyword id="KW-0862">Zinc</keyword>
<comment type="function">
    <text evidence="1">Component of a multiprotein complex required for the assembly of the RNA endonuclease module of the integrator complex (By similarity). Associates with ints9 and ints11 in the cytoplasm and blocks the active site of ints11 to inhibit the endonuclease activity of ints11 before formation of the full integrator complex (By similarity). Following dissociation of wdr73 of the complex, brat1 facilitates the nuclear import of the ints9-ints11 heterodimer (By similarity). In the nucleus, ints4 is integrated to the ints9-ints11 heterodimer and brat1 is released from the mature RNA endonuclease module by inositol hexakisphosphate (InsP6) (By similarity). Also involved in DNA damage response; activates kinases atm, smc1a and prkdc by modulating their phosphorylation status following ionizing radiation (IR) stress (By similarity).</text>
</comment>
<comment type="subcellular location">
    <subcellularLocation>
        <location evidence="1">Nucleus</location>
    </subcellularLocation>
    <subcellularLocation>
        <location evidence="1">Cytoplasm</location>
    </subcellularLocation>
    <text evidence="1">Present at double strand breaks (DSBs) following ionizing radiation treatment.</text>
</comment>
<comment type="domain">
    <text evidence="1">The BRAT1-like motif mediates inhibition of the endonuclease activity of INTS11 by forming hyrogen bond and hydrophobic interactions with the active site of INTS11: Cys-821 coordinates one of the two active site zinc ions of INTS11.</text>
</comment>
<comment type="similarity">
    <text evidence="2">Belongs to the BRAT1 family.</text>
</comment>
<protein>
    <recommendedName>
        <fullName evidence="2">Integrator complex assembly factor BRAT1</fullName>
    </recommendedName>
    <alternativeName>
        <fullName>BRCA1-associated ATM activator 1</fullName>
    </alternativeName>
    <alternativeName>
        <fullName>BRCA1-associated protein required for ATM activation protein 1</fullName>
    </alternativeName>
</protein>
<accession>Q1RLU1</accession>
<evidence type="ECO:0000250" key="1">
    <source>
        <dbReference type="UniProtKB" id="Q6PJG6"/>
    </source>
</evidence>
<evidence type="ECO:0000305" key="2"/>
<dbReference type="EMBL" id="BC115289">
    <property type="protein sequence ID" value="AAI15290.1"/>
    <property type="molecule type" value="mRNA"/>
</dbReference>
<dbReference type="RefSeq" id="NP_001035395.1">
    <property type="nucleotide sequence ID" value="NM_001040305.1"/>
</dbReference>
<dbReference type="SMR" id="Q1RLU1"/>
<dbReference type="FunCoup" id="Q1RLU1">
    <property type="interactions" value="1922"/>
</dbReference>
<dbReference type="STRING" id="7955.ENSDARP00000085122"/>
<dbReference type="PaxDb" id="7955-ENSDARP00000085122"/>
<dbReference type="Ensembl" id="ENSDART00000090689">
    <property type="protein sequence ID" value="ENSDARP00000085122"/>
    <property type="gene ID" value="ENSDARG00000062585"/>
</dbReference>
<dbReference type="GeneID" id="678547"/>
<dbReference type="KEGG" id="dre:678547"/>
<dbReference type="AGR" id="ZFIN:ZDB-GENE-060421-6989"/>
<dbReference type="CTD" id="221927"/>
<dbReference type="ZFIN" id="ZDB-GENE-060421-6989">
    <property type="gene designation" value="brat1"/>
</dbReference>
<dbReference type="eggNOG" id="ENOG502QRW9">
    <property type="taxonomic scope" value="Eukaryota"/>
</dbReference>
<dbReference type="HOGENOM" id="CLU_018926_1_0_1"/>
<dbReference type="InParanoid" id="Q1RLU1"/>
<dbReference type="OMA" id="IQVFTEW"/>
<dbReference type="OrthoDB" id="10057956at2759"/>
<dbReference type="PhylomeDB" id="Q1RLU1"/>
<dbReference type="TreeFam" id="TF324349"/>
<dbReference type="PRO" id="PR:Q1RLU1"/>
<dbReference type="Proteomes" id="UP000000437">
    <property type="component" value="Chromosome 1"/>
</dbReference>
<dbReference type="Bgee" id="ENSDARG00000062585">
    <property type="expression patterns" value="Expressed in mature ovarian follicle and 20 other cell types or tissues"/>
</dbReference>
<dbReference type="GO" id="GO:0005737">
    <property type="term" value="C:cytoplasm"/>
    <property type="evidence" value="ECO:0000250"/>
    <property type="project" value="UniProtKB"/>
</dbReference>
<dbReference type="GO" id="GO:0005634">
    <property type="term" value="C:nucleus"/>
    <property type="evidence" value="ECO:0000250"/>
    <property type="project" value="UniProtKB"/>
</dbReference>
<dbReference type="GO" id="GO:0008428">
    <property type="term" value="F:ribonuclease inhibitor activity"/>
    <property type="evidence" value="ECO:0000250"/>
    <property type="project" value="UniProtKB"/>
</dbReference>
<dbReference type="GO" id="GO:0008283">
    <property type="term" value="P:cell population proliferation"/>
    <property type="evidence" value="ECO:0007669"/>
    <property type="project" value="InterPro"/>
</dbReference>
<dbReference type="GO" id="GO:0006974">
    <property type="term" value="P:DNA damage response"/>
    <property type="evidence" value="ECO:0000250"/>
    <property type="project" value="UniProtKB"/>
</dbReference>
<dbReference type="GO" id="GO:0160234">
    <property type="term" value="P:integrator complex assembly"/>
    <property type="evidence" value="ECO:0000250"/>
    <property type="project" value="UniProtKB"/>
</dbReference>
<dbReference type="GO" id="GO:0001934">
    <property type="term" value="P:positive regulation of protein phosphorylation"/>
    <property type="evidence" value="ECO:0000250"/>
    <property type="project" value="UniProtKB"/>
</dbReference>
<dbReference type="GO" id="GO:0034504">
    <property type="term" value="P:protein localization to nucleus"/>
    <property type="evidence" value="ECO:0000250"/>
    <property type="project" value="UniProtKB"/>
</dbReference>
<dbReference type="GO" id="GO:0010212">
    <property type="term" value="P:response to ionizing radiation"/>
    <property type="evidence" value="ECO:0000250"/>
    <property type="project" value="UniProtKB"/>
</dbReference>
<dbReference type="Gene3D" id="1.25.10.10">
    <property type="entry name" value="Leucine-rich Repeat Variant"/>
    <property type="match status" value="1"/>
</dbReference>
<dbReference type="InterPro" id="IPR011989">
    <property type="entry name" value="ARM-like"/>
</dbReference>
<dbReference type="InterPro" id="IPR016024">
    <property type="entry name" value="ARM-type_fold"/>
</dbReference>
<dbReference type="InterPro" id="IPR038904">
    <property type="entry name" value="BRAT1"/>
</dbReference>
<dbReference type="PANTHER" id="PTHR21331">
    <property type="entry name" value="BRCA1-ASSOCIATED ATM ACTIVATOR 1"/>
    <property type="match status" value="1"/>
</dbReference>
<dbReference type="PANTHER" id="PTHR21331:SF2">
    <property type="entry name" value="BRCA1-ASSOCIATED ATM ACTIVATOR 1"/>
    <property type="match status" value="1"/>
</dbReference>
<dbReference type="SUPFAM" id="SSF48371">
    <property type="entry name" value="ARM repeat"/>
    <property type="match status" value="1"/>
</dbReference>
<proteinExistence type="evidence at transcript level"/>
<organism>
    <name type="scientific">Danio rerio</name>
    <name type="common">Zebrafish</name>
    <name type="synonym">Brachydanio rerio</name>
    <dbReference type="NCBI Taxonomy" id="7955"/>
    <lineage>
        <taxon>Eukaryota</taxon>
        <taxon>Metazoa</taxon>
        <taxon>Chordata</taxon>
        <taxon>Craniata</taxon>
        <taxon>Vertebrata</taxon>
        <taxon>Euteleostomi</taxon>
        <taxon>Actinopterygii</taxon>
        <taxon>Neopterygii</taxon>
        <taxon>Teleostei</taxon>
        <taxon>Ostariophysi</taxon>
        <taxon>Cypriniformes</taxon>
        <taxon>Danionidae</taxon>
        <taxon>Danioninae</taxon>
        <taxon>Danio</taxon>
    </lineage>
</organism>
<reference key="1">
    <citation type="submission" date="2006-04" db="EMBL/GenBank/DDBJ databases">
        <authorList>
            <consortium name="NIH - Zebrafish Gene Collection (ZGC) project"/>
        </authorList>
    </citation>
    <scope>NUCLEOTIDE SEQUENCE [LARGE SCALE MRNA]</scope>
</reference>
<name>BRAT1_DANRE</name>
<gene>
    <name type="primary">brat1</name>
    <name type="synonym">baat1</name>
    <name type="ORF">zgc:136845</name>
</gene>
<sequence>MDGDCSSLLPAVCLVLADPKQTPPDDTSLEKLLDWFKDLHSQSNGQVLLEHQPCLLEFISSVCASKATDPAILSFTLKLTGLLAASKQDFHLLEEGGHLVCVFEREAWSVCDLWEDASVRSGWIQGLLNMLKHQQALDFICRQGLIKVILQLQNDRSLFVACLANQLLVQILKLLTPSDVTSGSDAVVSSKSSSSLDWVSVSSEITNAVVEALSSENHPQVLQGVQLLSLVLSQCEEPIRSSLWKDVLPPLEVLINRGSEPLTQPLMTVLRAAVMTPLLGQSEYKVEEFLEVMLGTGNRKEGILCATLIVKLEKCPKVLKRKAMDIILLPLQCVSTQSQDEKEVDLVLKEPLSQKALCISLLVQSLSSLAELAHKEYFEGVCIPSVTSRVVQLLRVCSGHCTSSLLHVSACTHLIGSCKIQRCGLDTLGALSVYEDNLDLRKDIFGVLLDYLKSPDSHATVLKKTFQAVLRWIGVCASFPDLLQFISNDLFPVLEKRMCDVRWEVRDSTLEFITQLTVALSDNSGFVEVLYTSGLVSILLSLLSDTEGYVRASAVTAVGEAVTSSVQQMALVSKINLLEEALAQMMIILSQDTEGFPRRAVVKTFTSWLKGSNPITALDSSLSSVLSLGGNDFDWEVKMHTLELAEALMEKMLTCCPYAVQSFSSSERTRLTQSLSKLKDLGLFDVLLNGLFDCDRPVCEKSCQLLLKLKRLNAEKADFDHDALVLKACGNRWGDEVQSRFLNKQQVKASEHVLIGGGEGTEKDLHCIKEIPLSVILQILDLDDMQRMLKLSSDHVVNSPRSLMEDILSAAQQSEENIVDCY</sequence>
<feature type="chain" id="PRO_0000360152" description="Integrator complex assembly factor BRAT1">
    <location>
        <begin position="1"/>
        <end position="822"/>
    </location>
</feature>
<feature type="repeat" description="HEAT 1">
    <location>
        <begin position="490"/>
        <end position="528"/>
    </location>
</feature>
<feature type="repeat" description="HEAT 2">
    <location>
        <begin position="535"/>
        <end position="573"/>
    </location>
</feature>
<feature type="short sequence motif" description="BRAT1-like motif" evidence="1">
    <location>
        <begin position="820"/>
        <end position="822"/>
    </location>
</feature>
<feature type="binding site" evidence="1">
    <location>
        <position position="821"/>
    </location>
    <ligand>
        <name>Zn(2+)</name>
        <dbReference type="ChEBI" id="CHEBI:29105"/>
    </ligand>
</feature>